<sequence length="162" mass="18079">MKLRILSVGSKMPKWIDTGFNEYHKRIQPMLTTEMVDLAAAKRAKNPSEANLAQYREQEGKAILATHQSNSREKLWVLDVKGKMLSTEQLADKLSEAMQVGDDVALVIGGADGVSPEVLAAADFKWSLSPLTLPHPLVRVVLMEQLYRAMSINNNHPYHRGN</sequence>
<evidence type="ECO:0000255" key="1">
    <source>
        <dbReference type="HAMAP-Rule" id="MF_00658"/>
    </source>
</evidence>
<protein>
    <recommendedName>
        <fullName evidence="1">Ribosomal RNA large subunit methyltransferase H</fullName>
        <ecNumber evidence="1">2.1.1.177</ecNumber>
    </recommendedName>
    <alternativeName>
        <fullName evidence="1">23S rRNA (pseudouridine1915-N3)-methyltransferase</fullName>
    </alternativeName>
    <alternativeName>
        <fullName evidence="1">23S rRNA m3Psi1915 methyltransferase</fullName>
    </alternativeName>
    <alternativeName>
        <fullName evidence="1">rRNA (pseudouridine-N3-)-methyltransferase RlmH</fullName>
    </alternativeName>
</protein>
<reference key="1">
    <citation type="submission" date="2007-05" db="EMBL/GenBank/DDBJ databases">
        <title>Complete sequence of chromosome of Psychrobacter sp. PRwf-1.</title>
        <authorList>
            <consortium name="US DOE Joint Genome Institute"/>
            <person name="Copeland A."/>
            <person name="Lucas S."/>
            <person name="Lapidus A."/>
            <person name="Barry K."/>
            <person name="Detter J.C."/>
            <person name="Glavina del Rio T."/>
            <person name="Hammon N."/>
            <person name="Israni S."/>
            <person name="Dalin E."/>
            <person name="Tice H."/>
            <person name="Pitluck S."/>
            <person name="Chain P."/>
            <person name="Malfatti S."/>
            <person name="Shin M."/>
            <person name="Vergez L."/>
            <person name="Schmutz J."/>
            <person name="Larimer F."/>
            <person name="Land M."/>
            <person name="Hauser L."/>
            <person name="Kyrpides N."/>
            <person name="Kim E."/>
            <person name="Tiedje J."/>
            <person name="Richardson P."/>
        </authorList>
    </citation>
    <scope>NUCLEOTIDE SEQUENCE [LARGE SCALE GENOMIC DNA]</scope>
    <source>
        <strain>PRwf-1</strain>
    </source>
</reference>
<proteinExistence type="inferred from homology"/>
<dbReference type="EC" id="2.1.1.177" evidence="1"/>
<dbReference type="EMBL" id="CP000713">
    <property type="protein sequence ID" value="ABQ94704.1"/>
    <property type="molecule type" value="Genomic_DNA"/>
</dbReference>
<dbReference type="SMR" id="A5WGB3"/>
<dbReference type="STRING" id="349106.PsycPRwf_1764"/>
<dbReference type="KEGG" id="prw:PsycPRwf_1764"/>
<dbReference type="eggNOG" id="COG1576">
    <property type="taxonomic scope" value="Bacteria"/>
</dbReference>
<dbReference type="HOGENOM" id="CLU_100552_1_0_6"/>
<dbReference type="GO" id="GO:0005737">
    <property type="term" value="C:cytoplasm"/>
    <property type="evidence" value="ECO:0007669"/>
    <property type="project" value="UniProtKB-SubCell"/>
</dbReference>
<dbReference type="GO" id="GO:0070038">
    <property type="term" value="F:rRNA (pseudouridine-N3-)-methyltransferase activity"/>
    <property type="evidence" value="ECO:0007669"/>
    <property type="project" value="UniProtKB-UniRule"/>
</dbReference>
<dbReference type="CDD" id="cd18081">
    <property type="entry name" value="RlmH-like"/>
    <property type="match status" value="1"/>
</dbReference>
<dbReference type="Gene3D" id="3.40.1280.10">
    <property type="match status" value="1"/>
</dbReference>
<dbReference type="HAMAP" id="MF_00658">
    <property type="entry name" value="23SrRNA_methyltr_H"/>
    <property type="match status" value="1"/>
</dbReference>
<dbReference type="InterPro" id="IPR029028">
    <property type="entry name" value="Alpha/beta_knot_MTases"/>
</dbReference>
<dbReference type="InterPro" id="IPR003742">
    <property type="entry name" value="RlmH-like"/>
</dbReference>
<dbReference type="InterPro" id="IPR029026">
    <property type="entry name" value="tRNA_m1G_MTases_N"/>
</dbReference>
<dbReference type="NCBIfam" id="NF000986">
    <property type="entry name" value="PRK00103.1-4"/>
    <property type="match status" value="1"/>
</dbReference>
<dbReference type="NCBIfam" id="TIGR00246">
    <property type="entry name" value="tRNA_RlmH_YbeA"/>
    <property type="match status" value="1"/>
</dbReference>
<dbReference type="PANTHER" id="PTHR33603">
    <property type="entry name" value="METHYLTRANSFERASE"/>
    <property type="match status" value="1"/>
</dbReference>
<dbReference type="PANTHER" id="PTHR33603:SF1">
    <property type="entry name" value="RIBOSOMAL RNA LARGE SUBUNIT METHYLTRANSFERASE H"/>
    <property type="match status" value="1"/>
</dbReference>
<dbReference type="Pfam" id="PF02590">
    <property type="entry name" value="SPOUT_MTase"/>
    <property type="match status" value="1"/>
</dbReference>
<dbReference type="PIRSF" id="PIRSF004505">
    <property type="entry name" value="MT_bac"/>
    <property type="match status" value="1"/>
</dbReference>
<dbReference type="SUPFAM" id="SSF75217">
    <property type="entry name" value="alpha/beta knot"/>
    <property type="match status" value="1"/>
</dbReference>
<feature type="chain" id="PRO_1000072708" description="Ribosomal RNA large subunit methyltransferase H">
    <location>
        <begin position="1"/>
        <end position="162"/>
    </location>
</feature>
<feature type="binding site" evidence="1">
    <location>
        <position position="78"/>
    </location>
    <ligand>
        <name>S-adenosyl-L-methionine</name>
        <dbReference type="ChEBI" id="CHEBI:59789"/>
    </ligand>
</feature>
<feature type="binding site" evidence="1">
    <location>
        <position position="109"/>
    </location>
    <ligand>
        <name>S-adenosyl-L-methionine</name>
        <dbReference type="ChEBI" id="CHEBI:59789"/>
    </ligand>
</feature>
<feature type="binding site" evidence="1">
    <location>
        <begin position="128"/>
        <end position="133"/>
    </location>
    <ligand>
        <name>S-adenosyl-L-methionine</name>
        <dbReference type="ChEBI" id="CHEBI:59789"/>
    </ligand>
</feature>
<keyword id="KW-0963">Cytoplasm</keyword>
<keyword id="KW-0489">Methyltransferase</keyword>
<keyword id="KW-0698">rRNA processing</keyword>
<keyword id="KW-0949">S-adenosyl-L-methionine</keyword>
<keyword id="KW-0808">Transferase</keyword>
<comment type="function">
    <text evidence="1">Specifically methylates the pseudouridine at position 1915 (m3Psi1915) in 23S rRNA.</text>
</comment>
<comment type="catalytic activity">
    <reaction evidence="1">
        <text>pseudouridine(1915) in 23S rRNA + S-adenosyl-L-methionine = N(3)-methylpseudouridine(1915) in 23S rRNA + S-adenosyl-L-homocysteine + H(+)</text>
        <dbReference type="Rhea" id="RHEA:42752"/>
        <dbReference type="Rhea" id="RHEA-COMP:10221"/>
        <dbReference type="Rhea" id="RHEA-COMP:10222"/>
        <dbReference type="ChEBI" id="CHEBI:15378"/>
        <dbReference type="ChEBI" id="CHEBI:57856"/>
        <dbReference type="ChEBI" id="CHEBI:59789"/>
        <dbReference type="ChEBI" id="CHEBI:65314"/>
        <dbReference type="ChEBI" id="CHEBI:74486"/>
        <dbReference type="EC" id="2.1.1.177"/>
    </reaction>
</comment>
<comment type="subunit">
    <text evidence="1">Homodimer.</text>
</comment>
<comment type="subcellular location">
    <subcellularLocation>
        <location evidence="1">Cytoplasm</location>
    </subcellularLocation>
</comment>
<comment type="similarity">
    <text evidence="1">Belongs to the RNA methyltransferase RlmH family.</text>
</comment>
<accession>A5WGB3</accession>
<name>RLMH_PSYWF</name>
<gene>
    <name evidence="1" type="primary">rlmH</name>
    <name type="ordered locus">PsycPRwf_1764</name>
</gene>
<organism>
    <name type="scientific">Psychrobacter sp. (strain PRwf-1)</name>
    <dbReference type="NCBI Taxonomy" id="349106"/>
    <lineage>
        <taxon>Bacteria</taxon>
        <taxon>Pseudomonadati</taxon>
        <taxon>Pseudomonadota</taxon>
        <taxon>Gammaproteobacteria</taxon>
        <taxon>Moraxellales</taxon>
        <taxon>Moraxellaceae</taxon>
        <taxon>Psychrobacter</taxon>
    </lineage>
</organism>